<feature type="chain" id="PRO_1000011338" description="Probable endonuclease 4">
    <location>
        <begin position="1"/>
        <end position="296"/>
    </location>
</feature>
<feature type="binding site" evidence="1">
    <location>
        <position position="68"/>
    </location>
    <ligand>
        <name>Zn(2+)</name>
        <dbReference type="ChEBI" id="CHEBI:29105"/>
        <label>1</label>
    </ligand>
</feature>
<feature type="binding site" evidence="1">
    <location>
        <position position="109"/>
    </location>
    <ligand>
        <name>Zn(2+)</name>
        <dbReference type="ChEBI" id="CHEBI:29105"/>
        <label>1</label>
    </ligand>
</feature>
<feature type="binding site" evidence="1">
    <location>
        <position position="144"/>
    </location>
    <ligand>
        <name>Zn(2+)</name>
        <dbReference type="ChEBI" id="CHEBI:29105"/>
        <label>1</label>
    </ligand>
</feature>
<feature type="binding site" evidence="1">
    <location>
        <position position="144"/>
    </location>
    <ligand>
        <name>Zn(2+)</name>
        <dbReference type="ChEBI" id="CHEBI:29105"/>
        <label>2</label>
    </ligand>
</feature>
<feature type="binding site" evidence="1">
    <location>
        <position position="178"/>
    </location>
    <ligand>
        <name>Zn(2+)</name>
        <dbReference type="ChEBI" id="CHEBI:29105"/>
        <label>2</label>
    </ligand>
</feature>
<feature type="binding site" evidence="1">
    <location>
        <position position="181"/>
    </location>
    <ligand>
        <name>Zn(2+)</name>
        <dbReference type="ChEBI" id="CHEBI:29105"/>
        <label>3</label>
    </ligand>
</feature>
<feature type="binding site" evidence="1">
    <location>
        <position position="213"/>
    </location>
    <ligand>
        <name>Zn(2+)</name>
        <dbReference type="ChEBI" id="CHEBI:29105"/>
        <label>2</label>
    </ligand>
</feature>
<feature type="binding site" evidence="1">
    <location>
        <position position="226"/>
    </location>
    <ligand>
        <name>Zn(2+)</name>
        <dbReference type="ChEBI" id="CHEBI:29105"/>
        <label>3</label>
    </ligand>
</feature>
<feature type="binding site" evidence="1">
    <location>
        <position position="228"/>
    </location>
    <ligand>
        <name>Zn(2+)</name>
        <dbReference type="ChEBI" id="CHEBI:29105"/>
        <label>3</label>
    </ligand>
</feature>
<feature type="binding site" evidence="1">
    <location>
        <position position="258"/>
    </location>
    <ligand>
        <name>Zn(2+)</name>
        <dbReference type="ChEBI" id="CHEBI:29105"/>
        <label>2</label>
    </ligand>
</feature>
<comment type="function">
    <text evidence="1">Endonuclease IV plays a role in DNA repair. It cleaves phosphodiester bonds at apurinic or apyrimidinic (AP) sites, generating a 3'-hydroxyl group and a 5'-terminal sugar phosphate.</text>
</comment>
<comment type="catalytic activity">
    <reaction evidence="1">
        <text>Endonucleolytic cleavage to 5'-phosphooligonucleotide end-products.</text>
        <dbReference type="EC" id="3.1.21.2"/>
    </reaction>
</comment>
<comment type="cofactor">
    <cofactor evidence="1">
        <name>Zn(2+)</name>
        <dbReference type="ChEBI" id="CHEBI:29105"/>
    </cofactor>
    <text evidence="1">Binds 3 Zn(2+) ions.</text>
</comment>
<comment type="disruption phenotype">
    <text evidence="2">No visible phenotype. Double cshB-nfo mutants are as cold-sensitive as the single cshB mutant.</text>
</comment>
<comment type="similarity">
    <text evidence="1">Belongs to the AP endonuclease 2 family.</text>
</comment>
<evidence type="ECO:0000255" key="1">
    <source>
        <dbReference type="HAMAP-Rule" id="MF_00152"/>
    </source>
</evidence>
<evidence type="ECO:0000269" key="2">
    <source>
    </source>
</evidence>
<keyword id="KW-0227">DNA damage</keyword>
<keyword id="KW-0234">DNA repair</keyword>
<keyword id="KW-0255">Endonuclease</keyword>
<keyword id="KW-0378">Hydrolase</keyword>
<keyword id="KW-0479">Metal-binding</keyword>
<keyword id="KW-0540">Nuclease</keyword>
<keyword id="KW-1185">Reference proteome</keyword>
<keyword id="KW-0862">Zinc</keyword>
<sequence length="296" mass="33159">MLLGSHVSMSGKKMLEGSAIEAHEYGETTFMIYTGAPQNTRRKSIEDLNITKGHEVMEKYGLSNIVVHAPYIINIANTTKPETFNLGVDFLQQEIERTQAIGAKDIVLHPGAHVGAGVDAGINKIIEGLNEVLTNDNNVRIALETMAGKGTEIGRSFEELARIIDGVHNNERLSVCFDTCHTHDAGYNVKEDFDGVLNEFDKIIGVDRIKVVHVNDSKNDRGAQKDRHENIGFGYIGFDALNYIVHHDSFKDIPKILETPYVGEDKKNKKPPYKLEIEMLKQQQFDPELKNKVMQQ</sequence>
<reference key="1">
    <citation type="book" date="2006" name="Gram positive pathogens, 2nd edition">
        <title>The Staphylococcus aureus NCTC 8325 genome.</title>
        <editorList>
            <person name="Fischetti V."/>
            <person name="Novick R."/>
            <person name="Ferretti J."/>
            <person name="Portnoy D."/>
            <person name="Rood J."/>
        </editorList>
        <authorList>
            <person name="Gillaspy A.F."/>
            <person name="Worrell V."/>
            <person name="Orvis J."/>
            <person name="Roe B.A."/>
            <person name="Dyer D.W."/>
            <person name="Iandolo J.J."/>
        </authorList>
    </citation>
    <scope>NUCLEOTIDE SEQUENCE [LARGE SCALE GENOMIC DNA]</scope>
    <source>
        <strain>NCTC 8325 / PS 47</strain>
    </source>
</reference>
<reference key="2">
    <citation type="journal article" date="2012" name="Appl. Environ. Microbiol.">
        <title>New range of vectors with a stringent 5-fluoroorotic acid-based counterselection system for generating mutants by allelic replacement in Staphylococcus aureus.</title>
        <authorList>
            <person name="Redder P."/>
            <person name="Linder P."/>
        </authorList>
    </citation>
    <scope>DISRUPTION PHENOTYPE</scope>
    <source>
        <strain>SA564</strain>
    </source>
</reference>
<proteinExistence type="inferred from homology"/>
<accession>Q2FY16</accession>
<name>END4_STAA8</name>
<gene>
    <name evidence="1" type="primary">nfo</name>
    <name type="ordered locus">SAOUHSC_01658</name>
</gene>
<organism>
    <name type="scientific">Staphylococcus aureus (strain NCTC 8325 / PS 47)</name>
    <dbReference type="NCBI Taxonomy" id="93061"/>
    <lineage>
        <taxon>Bacteria</taxon>
        <taxon>Bacillati</taxon>
        <taxon>Bacillota</taxon>
        <taxon>Bacilli</taxon>
        <taxon>Bacillales</taxon>
        <taxon>Staphylococcaceae</taxon>
        <taxon>Staphylococcus</taxon>
    </lineage>
</organism>
<dbReference type="EC" id="3.1.21.2" evidence="1"/>
<dbReference type="EMBL" id="CP000253">
    <property type="protein sequence ID" value="ABD30733.1"/>
    <property type="molecule type" value="Genomic_DNA"/>
</dbReference>
<dbReference type="RefSeq" id="WP_000924214.1">
    <property type="nucleotide sequence ID" value="NZ_LS483365.1"/>
</dbReference>
<dbReference type="RefSeq" id="YP_500169.1">
    <property type="nucleotide sequence ID" value="NC_007795.1"/>
</dbReference>
<dbReference type="SMR" id="Q2FY16"/>
<dbReference type="STRING" id="93061.SAOUHSC_01658"/>
<dbReference type="PaxDb" id="1280-SAXN108_1579"/>
<dbReference type="GeneID" id="3920109"/>
<dbReference type="KEGG" id="sao:SAOUHSC_01658"/>
<dbReference type="PATRIC" id="fig|93061.5.peg.1508"/>
<dbReference type="eggNOG" id="COG0648">
    <property type="taxonomic scope" value="Bacteria"/>
</dbReference>
<dbReference type="HOGENOM" id="CLU_025885_4_1_9"/>
<dbReference type="OrthoDB" id="9805666at2"/>
<dbReference type="PRO" id="PR:Q2FY16"/>
<dbReference type="Proteomes" id="UP000008816">
    <property type="component" value="Chromosome"/>
</dbReference>
<dbReference type="GO" id="GO:0008833">
    <property type="term" value="F:deoxyribonuclease IV (phage-T4-induced) activity"/>
    <property type="evidence" value="ECO:0007669"/>
    <property type="project" value="UniProtKB-UniRule"/>
</dbReference>
<dbReference type="GO" id="GO:0003677">
    <property type="term" value="F:DNA binding"/>
    <property type="evidence" value="ECO:0007669"/>
    <property type="project" value="InterPro"/>
</dbReference>
<dbReference type="GO" id="GO:0003906">
    <property type="term" value="F:DNA-(apurinic or apyrimidinic site) endonuclease activity"/>
    <property type="evidence" value="ECO:0000318"/>
    <property type="project" value="GO_Central"/>
</dbReference>
<dbReference type="GO" id="GO:0008081">
    <property type="term" value="F:phosphoric diester hydrolase activity"/>
    <property type="evidence" value="ECO:0000318"/>
    <property type="project" value="GO_Central"/>
</dbReference>
<dbReference type="GO" id="GO:0008270">
    <property type="term" value="F:zinc ion binding"/>
    <property type="evidence" value="ECO:0007669"/>
    <property type="project" value="UniProtKB-UniRule"/>
</dbReference>
<dbReference type="GO" id="GO:0006284">
    <property type="term" value="P:base-excision repair"/>
    <property type="evidence" value="ECO:0000318"/>
    <property type="project" value="GO_Central"/>
</dbReference>
<dbReference type="CDD" id="cd00019">
    <property type="entry name" value="AP2Ec"/>
    <property type="match status" value="1"/>
</dbReference>
<dbReference type="FunFam" id="3.20.20.150:FF:000001">
    <property type="entry name" value="Probable endonuclease 4"/>
    <property type="match status" value="1"/>
</dbReference>
<dbReference type="Gene3D" id="3.20.20.150">
    <property type="entry name" value="Divalent-metal-dependent TIM barrel enzymes"/>
    <property type="match status" value="1"/>
</dbReference>
<dbReference type="HAMAP" id="MF_00152">
    <property type="entry name" value="Nfo"/>
    <property type="match status" value="1"/>
</dbReference>
<dbReference type="InterPro" id="IPR001719">
    <property type="entry name" value="AP_endonuc_2"/>
</dbReference>
<dbReference type="InterPro" id="IPR018246">
    <property type="entry name" value="AP_endonuc_F2_Zn_BS"/>
</dbReference>
<dbReference type="InterPro" id="IPR036237">
    <property type="entry name" value="Xyl_isomerase-like_sf"/>
</dbReference>
<dbReference type="InterPro" id="IPR013022">
    <property type="entry name" value="Xyl_isomerase-like_TIM-brl"/>
</dbReference>
<dbReference type="NCBIfam" id="TIGR00587">
    <property type="entry name" value="nfo"/>
    <property type="match status" value="1"/>
</dbReference>
<dbReference type="NCBIfam" id="NF002196">
    <property type="entry name" value="PRK01060.1-1"/>
    <property type="match status" value="1"/>
</dbReference>
<dbReference type="PANTHER" id="PTHR21445:SF0">
    <property type="entry name" value="APURINIC-APYRIMIDINIC ENDONUCLEASE"/>
    <property type="match status" value="1"/>
</dbReference>
<dbReference type="PANTHER" id="PTHR21445">
    <property type="entry name" value="ENDONUCLEASE IV ENDODEOXYRIBONUCLEASE IV"/>
    <property type="match status" value="1"/>
</dbReference>
<dbReference type="Pfam" id="PF01261">
    <property type="entry name" value="AP_endonuc_2"/>
    <property type="match status" value="1"/>
</dbReference>
<dbReference type="SMART" id="SM00518">
    <property type="entry name" value="AP2Ec"/>
    <property type="match status" value="1"/>
</dbReference>
<dbReference type="SUPFAM" id="SSF51658">
    <property type="entry name" value="Xylose isomerase-like"/>
    <property type="match status" value="1"/>
</dbReference>
<dbReference type="PROSITE" id="PS00729">
    <property type="entry name" value="AP_NUCLEASE_F2_1"/>
    <property type="match status" value="1"/>
</dbReference>
<dbReference type="PROSITE" id="PS00730">
    <property type="entry name" value="AP_NUCLEASE_F2_2"/>
    <property type="match status" value="1"/>
</dbReference>
<dbReference type="PROSITE" id="PS00731">
    <property type="entry name" value="AP_NUCLEASE_F2_3"/>
    <property type="match status" value="1"/>
</dbReference>
<dbReference type="PROSITE" id="PS51432">
    <property type="entry name" value="AP_NUCLEASE_F2_4"/>
    <property type="match status" value="1"/>
</dbReference>
<protein>
    <recommendedName>
        <fullName evidence="1">Probable endonuclease 4</fullName>
        <ecNumber evidence="1">3.1.21.2</ecNumber>
    </recommendedName>
    <alternativeName>
        <fullName evidence="1">Endodeoxyribonuclease IV</fullName>
    </alternativeName>
    <alternativeName>
        <fullName evidence="1">Endonuclease IV</fullName>
    </alternativeName>
</protein>